<keyword id="KW-0002">3D-structure</keyword>
<keyword id="KW-0119">Carbohydrate metabolism</keyword>
<keyword id="KW-0325">Glycoprotein</keyword>
<keyword id="KW-0326">Glycosidase</keyword>
<keyword id="KW-0378">Hydrolase</keyword>
<keyword id="KW-0624">Polysaccharide degradation</keyword>
<keyword id="KW-1185">Reference proteome</keyword>
<keyword id="KW-0964">Secreted</keyword>
<keyword id="KW-0732">Signal</keyword>
<keyword id="KW-0858">Xylan degradation</keyword>
<reference key="1">
    <citation type="journal article" date="1998" name="Appl. Environ. Microbiol.">
        <title>Molecular cloning and transcriptional regulation of the Aspergillus nidulans xlnD gene encoding a beta-xylosidase.</title>
        <authorList>
            <person name="Perez-Gonzalez J.A."/>
            <person name="van Peij N.N."/>
            <person name="Bezoen A."/>
            <person name="MacCabe A.P."/>
            <person name="Ramon D."/>
            <person name="de Graaff L.H."/>
        </authorList>
    </citation>
    <scope>NUCLEOTIDE SEQUENCE [GENOMIC DNA]</scope>
    <scope>FUNCTION</scope>
</reference>
<reference key="2">
    <citation type="journal article" date="2005" name="Nature">
        <title>Sequencing of Aspergillus nidulans and comparative analysis with A. fumigatus and A. oryzae.</title>
        <authorList>
            <person name="Galagan J.E."/>
            <person name="Calvo S.E."/>
            <person name="Cuomo C."/>
            <person name="Ma L.-J."/>
            <person name="Wortman J.R."/>
            <person name="Batzoglou S."/>
            <person name="Lee S.-I."/>
            <person name="Bastuerkmen M."/>
            <person name="Spevak C.C."/>
            <person name="Clutterbuck J."/>
            <person name="Kapitonov V."/>
            <person name="Jurka J."/>
            <person name="Scazzocchio C."/>
            <person name="Farman M.L."/>
            <person name="Butler J."/>
            <person name="Purcell S."/>
            <person name="Harris S."/>
            <person name="Braus G.H."/>
            <person name="Draht O."/>
            <person name="Busch S."/>
            <person name="D'Enfert C."/>
            <person name="Bouchier C."/>
            <person name="Goldman G.H."/>
            <person name="Bell-Pedersen D."/>
            <person name="Griffiths-Jones S."/>
            <person name="Doonan J.H."/>
            <person name="Yu J."/>
            <person name="Vienken K."/>
            <person name="Pain A."/>
            <person name="Freitag M."/>
            <person name="Selker E.U."/>
            <person name="Archer D.B."/>
            <person name="Penalva M.A."/>
            <person name="Oakley B.R."/>
            <person name="Momany M."/>
            <person name="Tanaka T."/>
            <person name="Kumagai T."/>
            <person name="Asai K."/>
            <person name="Machida M."/>
            <person name="Nierman W.C."/>
            <person name="Denning D.W."/>
            <person name="Caddick M.X."/>
            <person name="Hynes M."/>
            <person name="Paoletti M."/>
            <person name="Fischer R."/>
            <person name="Miller B.L."/>
            <person name="Dyer P.S."/>
            <person name="Sachs M.S."/>
            <person name="Osmani S.A."/>
            <person name="Birren B.W."/>
        </authorList>
    </citation>
    <scope>NUCLEOTIDE SEQUENCE [LARGE SCALE GENOMIC DNA]</scope>
    <source>
        <strain>FGSC A4 / ATCC 38163 / CBS 112.46 / NRRL 194 / M139</strain>
    </source>
</reference>
<reference key="3">
    <citation type="journal article" date="2009" name="Fungal Genet. Biol.">
        <title>The 2008 update of the Aspergillus nidulans genome annotation: a community effort.</title>
        <authorList>
            <person name="Wortman J.R."/>
            <person name="Gilsenan J.M."/>
            <person name="Joardar V."/>
            <person name="Deegan J."/>
            <person name="Clutterbuck J."/>
            <person name="Andersen M.R."/>
            <person name="Archer D."/>
            <person name="Bencina M."/>
            <person name="Braus G."/>
            <person name="Coutinho P."/>
            <person name="von Dohren H."/>
            <person name="Doonan J."/>
            <person name="Driessen A.J."/>
            <person name="Durek P."/>
            <person name="Espeso E."/>
            <person name="Fekete E."/>
            <person name="Flipphi M."/>
            <person name="Estrada C.G."/>
            <person name="Geysens S."/>
            <person name="Goldman G."/>
            <person name="de Groot P.W."/>
            <person name="Hansen K."/>
            <person name="Harris S.D."/>
            <person name="Heinekamp T."/>
            <person name="Helmstaedt K."/>
            <person name="Henrissat B."/>
            <person name="Hofmann G."/>
            <person name="Homan T."/>
            <person name="Horio T."/>
            <person name="Horiuchi H."/>
            <person name="James S."/>
            <person name="Jones M."/>
            <person name="Karaffa L."/>
            <person name="Karanyi Z."/>
            <person name="Kato M."/>
            <person name="Keller N."/>
            <person name="Kelly D.E."/>
            <person name="Kiel J.A."/>
            <person name="Kim J.M."/>
            <person name="van der Klei I.J."/>
            <person name="Klis F.M."/>
            <person name="Kovalchuk A."/>
            <person name="Krasevec N."/>
            <person name="Kubicek C.P."/>
            <person name="Liu B."/>
            <person name="Maccabe A."/>
            <person name="Meyer V."/>
            <person name="Mirabito P."/>
            <person name="Miskei M."/>
            <person name="Mos M."/>
            <person name="Mullins J."/>
            <person name="Nelson D.R."/>
            <person name="Nielsen J."/>
            <person name="Oakley B.R."/>
            <person name="Osmani S.A."/>
            <person name="Pakula T."/>
            <person name="Paszewski A."/>
            <person name="Paulsen I."/>
            <person name="Pilsyk S."/>
            <person name="Pocsi I."/>
            <person name="Punt P.J."/>
            <person name="Ram A.F."/>
            <person name="Ren Q."/>
            <person name="Robellet X."/>
            <person name="Robson G."/>
            <person name="Seiboth B."/>
            <person name="van Solingen P."/>
            <person name="Specht T."/>
            <person name="Sun J."/>
            <person name="Taheri-Talesh N."/>
            <person name="Takeshita N."/>
            <person name="Ussery D."/>
            <person name="vanKuyk P.A."/>
            <person name="Visser H."/>
            <person name="van de Vondervoort P.J."/>
            <person name="de Vries R.P."/>
            <person name="Walton J."/>
            <person name="Xiang X."/>
            <person name="Xiong Y."/>
            <person name="Zeng A.P."/>
            <person name="Brandt B.W."/>
            <person name="Cornell M.J."/>
            <person name="van den Hondel C.A."/>
            <person name="Visser J."/>
            <person name="Oliver S.G."/>
            <person name="Turner G."/>
        </authorList>
    </citation>
    <scope>GENOME REANNOTATION</scope>
    <source>
        <strain>FGSC A4 / ATCC 38163 / CBS 112.46 / NRRL 194 / M139</strain>
    </source>
</reference>
<reference key="4">
    <citation type="journal article" date="2006" name="Proc. Natl. Acad. Sci. U.S.A.">
        <title>Development and application of a suite of polysaccharide-degrading enzymes for analyzing plant cell walls.</title>
        <authorList>
            <person name="Bauer S."/>
            <person name="Vasu P."/>
            <person name="Persson S."/>
            <person name="Mort A.J."/>
            <person name="Somerville C.R."/>
        </authorList>
    </citation>
    <scope>FUNCTION</scope>
    <scope>BIOPHYSICOCHEMICAL PROPERTIES</scope>
</reference>
<proteinExistence type="evidence at protein level"/>
<protein>
    <recommendedName>
        <fullName>Exo-1,4-beta-xylosidase xlnD</fullName>
        <ecNumber>3.2.1.37</ecNumber>
    </recommendedName>
    <alternativeName>
        <fullName>1,4-beta-D-xylan xylohydrolase xlnD</fullName>
    </alternativeName>
    <alternativeName>
        <fullName>Beta-xylosidase A</fullName>
    </alternativeName>
    <alternativeName>
        <fullName>Beta-xylosidase xlnD</fullName>
    </alternativeName>
    <alternativeName>
        <fullName>Xylobiase xlnD</fullName>
    </alternativeName>
</protein>
<evidence type="ECO:0000250" key="1"/>
<evidence type="ECO:0000255" key="2"/>
<evidence type="ECO:0000269" key="3">
    <source>
    </source>
</evidence>
<evidence type="ECO:0000269" key="4">
    <source>
    </source>
</evidence>
<evidence type="ECO:0000305" key="5"/>
<evidence type="ECO:0007829" key="6">
    <source>
        <dbReference type="PDB" id="6Q7I"/>
    </source>
</evidence>
<evidence type="ECO:0007829" key="7">
    <source>
        <dbReference type="PDB" id="6Q7J"/>
    </source>
</evidence>
<dbReference type="EC" id="3.2.1.37"/>
<dbReference type="EMBL" id="Y13568">
    <property type="protein sequence ID" value="CAA73902.1"/>
    <property type="molecule type" value="Genomic_DNA"/>
</dbReference>
<dbReference type="EMBL" id="AACD01000039">
    <property type="protein sequence ID" value="EAA64470.1"/>
    <property type="molecule type" value="Genomic_DNA"/>
</dbReference>
<dbReference type="EMBL" id="BN001307">
    <property type="protein sequence ID" value="CBF86686.1"/>
    <property type="molecule type" value="Genomic_DNA"/>
</dbReference>
<dbReference type="RefSeq" id="XP_659963.1">
    <property type="nucleotide sequence ID" value="XM_654871.1"/>
</dbReference>
<dbReference type="PDB" id="6Q7I">
    <property type="method" value="X-ray"/>
    <property type="resolution" value="1.48 A"/>
    <property type="chains" value="A/B=19-803"/>
</dbReference>
<dbReference type="PDB" id="6Q7J">
    <property type="method" value="X-ray"/>
    <property type="resolution" value="2.14 A"/>
    <property type="chains" value="A/B=20-803"/>
</dbReference>
<dbReference type="PDBsum" id="6Q7I"/>
<dbReference type="PDBsum" id="6Q7J"/>
<dbReference type="SMR" id="Q5BAS1"/>
<dbReference type="STRING" id="227321.Q5BAS1"/>
<dbReference type="CAZy" id="GH3">
    <property type="family name" value="Glycoside Hydrolase Family 3"/>
</dbReference>
<dbReference type="GlyCosmos" id="Q5BAS1">
    <property type="glycosylation" value="12 sites, No reported glycans"/>
</dbReference>
<dbReference type="EnsemblFungi" id="CBF86686">
    <property type="protein sequence ID" value="CBF86686"/>
    <property type="gene ID" value="ANIA_02359"/>
</dbReference>
<dbReference type="KEGG" id="ani:ANIA_02359"/>
<dbReference type="eggNOG" id="ENOG502QQ55">
    <property type="taxonomic scope" value="Eukaryota"/>
</dbReference>
<dbReference type="HOGENOM" id="CLU_004542_5_3_1"/>
<dbReference type="InParanoid" id="Q5BAS1"/>
<dbReference type="OMA" id="GLPNYQV"/>
<dbReference type="OrthoDB" id="47059at2759"/>
<dbReference type="UniPathway" id="UPA00114"/>
<dbReference type="Proteomes" id="UP000000560">
    <property type="component" value="Chromosome VII"/>
</dbReference>
<dbReference type="GO" id="GO:0005576">
    <property type="term" value="C:extracellular region"/>
    <property type="evidence" value="ECO:0007669"/>
    <property type="project" value="UniProtKB-SubCell"/>
</dbReference>
<dbReference type="GO" id="GO:0046556">
    <property type="term" value="F:alpha-L-arabinofuranosidase activity"/>
    <property type="evidence" value="ECO:0000318"/>
    <property type="project" value="GO_Central"/>
</dbReference>
<dbReference type="GO" id="GO:0009044">
    <property type="term" value="F:xylan 1,4-beta-xylosidase activity"/>
    <property type="evidence" value="ECO:0000314"/>
    <property type="project" value="UniProtKB"/>
</dbReference>
<dbReference type="GO" id="GO:0031222">
    <property type="term" value="P:arabinan catabolic process"/>
    <property type="evidence" value="ECO:0000318"/>
    <property type="project" value="GO_Central"/>
</dbReference>
<dbReference type="GO" id="GO:0045493">
    <property type="term" value="P:xylan catabolic process"/>
    <property type="evidence" value="ECO:0000314"/>
    <property type="project" value="UniProtKB"/>
</dbReference>
<dbReference type="FunFam" id="2.60.40.10:FF:001420">
    <property type="entry name" value="Exo-1,4-beta-xylosidase xlnD"/>
    <property type="match status" value="1"/>
</dbReference>
<dbReference type="FunFam" id="3.20.20.300:FF:000009">
    <property type="entry name" value="Exo-1,4-beta-xylosidase xlnD"/>
    <property type="match status" value="1"/>
</dbReference>
<dbReference type="FunFam" id="3.40.50.1700:FF:000007">
    <property type="entry name" value="Exo-1,4-beta-xylosidase xlnD"/>
    <property type="match status" value="1"/>
</dbReference>
<dbReference type="Gene3D" id="3.40.50.1700">
    <property type="entry name" value="Glycoside hydrolase family 3 C-terminal domain"/>
    <property type="match status" value="1"/>
</dbReference>
<dbReference type="Gene3D" id="3.20.20.300">
    <property type="entry name" value="Glycoside hydrolase, family 3, N-terminal domain"/>
    <property type="match status" value="1"/>
</dbReference>
<dbReference type="Gene3D" id="2.60.40.10">
    <property type="entry name" value="Immunoglobulins"/>
    <property type="match status" value="1"/>
</dbReference>
<dbReference type="InterPro" id="IPR044993">
    <property type="entry name" value="BXL"/>
</dbReference>
<dbReference type="InterPro" id="IPR026891">
    <property type="entry name" value="Fn3-like"/>
</dbReference>
<dbReference type="InterPro" id="IPR002772">
    <property type="entry name" value="Glyco_hydro_3_C"/>
</dbReference>
<dbReference type="InterPro" id="IPR036881">
    <property type="entry name" value="Glyco_hydro_3_C_sf"/>
</dbReference>
<dbReference type="InterPro" id="IPR001764">
    <property type="entry name" value="Glyco_hydro_3_N"/>
</dbReference>
<dbReference type="InterPro" id="IPR036962">
    <property type="entry name" value="Glyco_hydro_3_N_sf"/>
</dbReference>
<dbReference type="InterPro" id="IPR017853">
    <property type="entry name" value="Glycoside_hydrolase_SF"/>
</dbReference>
<dbReference type="InterPro" id="IPR013783">
    <property type="entry name" value="Ig-like_fold"/>
</dbReference>
<dbReference type="PANTHER" id="PTHR42721:SF13">
    <property type="entry name" value="EXO-1,4-BETA-XYLOSIDASE XLND"/>
    <property type="match status" value="1"/>
</dbReference>
<dbReference type="PANTHER" id="PTHR42721">
    <property type="entry name" value="SUGAR HYDROLASE-RELATED"/>
    <property type="match status" value="1"/>
</dbReference>
<dbReference type="Pfam" id="PF14310">
    <property type="entry name" value="Fn3-like"/>
    <property type="match status" value="1"/>
</dbReference>
<dbReference type="Pfam" id="PF00933">
    <property type="entry name" value="Glyco_hydro_3"/>
    <property type="match status" value="1"/>
</dbReference>
<dbReference type="Pfam" id="PF01915">
    <property type="entry name" value="Glyco_hydro_3_C"/>
    <property type="match status" value="1"/>
</dbReference>
<dbReference type="SMART" id="SM01217">
    <property type="entry name" value="Fn3_like"/>
    <property type="match status" value="1"/>
</dbReference>
<dbReference type="SUPFAM" id="SSF51445">
    <property type="entry name" value="(Trans)glycosidases"/>
    <property type="match status" value="1"/>
</dbReference>
<dbReference type="SUPFAM" id="SSF52279">
    <property type="entry name" value="Beta-D-glucan exohydrolase, C-terminal domain"/>
    <property type="match status" value="1"/>
</dbReference>
<sequence>MRSLISVAVLSALPTAFSQANTSYTDYNVEANPDLFPLCLQHLNASFPDCASGPLSLTPVCDRSLSPKDRATALVSLFTFDELVNNTGNTGLGVSRLGLPNYQVWGEALHGVGRANFVESGNFSWATSFPMPITMMAALNKTLIHQIGTIVSTQLRAFSNAGLGGVDVYSPNINTFRHPVWGRGQETPGEDAFLTSVYGYEYITALQGGVDPETLKIIATAKHYAGYDIESWNNHSRLGNDMQITQQELSEYYTPPFIVASRDAKVRSVMCSYNAVNGVPSCANKFFLQTLLRDTFEFSEDGYVSGDCGAVYNVWNPHGYASNEAAASADSILAGTDIDCGTSYQWHSEDAFEDSLVSRSDIERGVIRLYSNLVQAGYFDGEDAPYRDITWDDVLSTDAWNIAYEAAVEGIVLLKNDETLPLSKDIKSVAVIGPWANVTEELQGNYFGPAPYLISPLTGFRDSGLDVHYALGTNLTSHSTSGFEEALTAAKQADAIIFAGGIDNTIEAEAMDRENITWPGNQLDLISKLSELGKPLVVLQMGGGQVDSSSLKDNDNVNALIWGGYPGQSGGHALADIITGKRAPAGRLVTTQYPAEYAEVFPAIDMNLRPNETSGNPGQTYMWYTGTPVYEFGHGLFYTTFEESTETTDAGSFNIQTVLTTPHSGYEHAQQKTLLNFTATVKNTGERESDYTALVYVNTTAGPAPYPKKWVVGFDRLGGLEPGDSQTLTVPVTVESVARTDEQGNRVLYPGSYELALNNERSVVVKFELKGEEAVILSWPEDTTSDFVSSIDGGLDRKQDVIA</sequence>
<feature type="signal peptide" evidence="2">
    <location>
        <begin position="1"/>
        <end position="18"/>
    </location>
</feature>
<feature type="chain" id="PRO_0000393293" description="Exo-1,4-beta-xylosidase xlnD">
    <location>
        <begin position="19"/>
        <end position="803"/>
    </location>
</feature>
<feature type="active site" evidence="1">
    <location>
        <position position="307"/>
    </location>
</feature>
<feature type="glycosylation site" description="N-linked (GlcNAc...) asparagine" evidence="2">
    <location>
        <position position="21"/>
    </location>
</feature>
<feature type="glycosylation site" description="N-linked (GlcNAc...) asparagine" evidence="2">
    <location>
        <position position="44"/>
    </location>
</feature>
<feature type="glycosylation site" description="N-linked (GlcNAc...) asparagine" evidence="2">
    <location>
        <position position="85"/>
    </location>
</feature>
<feature type="glycosylation site" description="N-linked (GlcNAc...) asparagine" evidence="2">
    <location>
        <position position="122"/>
    </location>
</feature>
<feature type="glycosylation site" description="N-linked (GlcNAc...) asparagine" evidence="2">
    <location>
        <position position="140"/>
    </location>
</feature>
<feature type="glycosylation site" description="N-linked (GlcNAc...) asparagine" evidence="2">
    <location>
        <position position="234"/>
    </location>
</feature>
<feature type="glycosylation site" description="N-linked (GlcNAc...) asparagine" evidence="2">
    <location>
        <position position="437"/>
    </location>
</feature>
<feature type="glycosylation site" description="N-linked (GlcNAc...) asparagine" evidence="2">
    <location>
        <position position="474"/>
    </location>
</feature>
<feature type="glycosylation site" description="N-linked (GlcNAc...) asparagine" evidence="2">
    <location>
        <position position="515"/>
    </location>
</feature>
<feature type="glycosylation site" description="N-linked (GlcNAc...) asparagine" evidence="2">
    <location>
        <position position="611"/>
    </location>
</feature>
<feature type="glycosylation site" description="N-linked (GlcNAc...) asparagine" evidence="2">
    <location>
        <position position="676"/>
    </location>
</feature>
<feature type="glycosylation site" description="N-linked (GlcNAc...) asparagine" evidence="2">
    <location>
        <position position="698"/>
    </location>
</feature>
<feature type="sequence conflict" description="In Ref. 1; CAA73902." evidence="5" ref="1">
    <original>PT</original>
    <variation>A</variation>
    <location>
        <begin position="14"/>
        <end position="15"/>
    </location>
</feature>
<feature type="sequence conflict" description="In Ref. 1; CAA73902." evidence="5" ref="1">
    <original>S</original>
    <variation>T</variation>
    <location>
        <position position="52"/>
    </location>
</feature>
<feature type="sequence conflict" description="In Ref. 1; CAA73902." evidence="5" ref="1">
    <original>G</original>
    <variation>A</variation>
    <location>
        <position position="209"/>
    </location>
</feature>
<feature type="sequence conflict" description="In Ref. 1; CAA73902." evidence="5" ref="1">
    <original>L</original>
    <variation>S</variation>
    <location>
        <position position="215"/>
    </location>
</feature>
<feature type="sequence conflict" description="In Ref. 1; CAA73902." evidence="5" ref="1">
    <original>EL</original>
    <variation>DV</variation>
    <location>
        <begin position="754"/>
        <end position="755"/>
    </location>
</feature>
<feature type="turn" evidence="6">
    <location>
        <begin position="27"/>
        <end position="29"/>
    </location>
</feature>
<feature type="helix" evidence="6">
    <location>
        <begin position="37"/>
        <end position="40"/>
    </location>
</feature>
<feature type="turn" evidence="6">
    <location>
        <begin position="50"/>
        <end position="52"/>
    </location>
</feature>
<feature type="helix" evidence="6">
    <location>
        <begin position="54"/>
        <end position="57"/>
    </location>
</feature>
<feature type="helix" evidence="6">
    <location>
        <begin position="59"/>
        <end position="61"/>
    </location>
</feature>
<feature type="helix" evidence="6">
    <location>
        <begin position="67"/>
        <end position="76"/>
    </location>
</feature>
<feature type="helix" evidence="6">
    <location>
        <begin position="80"/>
        <end position="84"/>
    </location>
</feature>
<feature type="strand" evidence="6">
    <location>
        <begin position="87"/>
        <end position="91"/>
    </location>
</feature>
<feature type="helix" evidence="6">
    <location>
        <begin position="95"/>
        <end position="97"/>
    </location>
</feature>
<feature type="strand" evidence="6">
    <location>
        <begin position="109"/>
        <end position="111"/>
    </location>
</feature>
<feature type="strand" evidence="6">
    <location>
        <begin position="119"/>
        <end position="121"/>
    </location>
</feature>
<feature type="helix" evidence="6">
    <location>
        <begin position="132"/>
        <end position="137"/>
    </location>
</feature>
<feature type="helix" evidence="6">
    <location>
        <begin position="141"/>
        <end position="160"/>
    </location>
</feature>
<feature type="helix" evidence="6">
    <location>
        <begin position="184"/>
        <end position="186"/>
    </location>
</feature>
<feature type="helix" evidence="6">
    <location>
        <begin position="192"/>
        <end position="207"/>
    </location>
</feature>
<feature type="strand" evidence="6">
    <location>
        <begin position="209"/>
        <end position="211"/>
    </location>
</feature>
<feature type="strand" evidence="6">
    <location>
        <begin position="216"/>
        <end position="218"/>
    </location>
</feature>
<feature type="strand" evidence="6">
    <location>
        <begin position="220"/>
        <end position="224"/>
    </location>
</feature>
<feature type="helix" evidence="6">
    <location>
        <begin position="232"/>
        <end position="234"/>
    </location>
</feature>
<feature type="turn" evidence="6">
    <location>
        <begin position="237"/>
        <end position="239"/>
    </location>
</feature>
<feature type="helix" evidence="6">
    <location>
        <begin position="246"/>
        <end position="251"/>
    </location>
</feature>
<feature type="helix" evidence="6">
    <location>
        <begin position="255"/>
        <end position="262"/>
    </location>
</feature>
<feature type="strand" evidence="6">
    <location>
        <begin position="267"/>
        <end position="271"/>
    </location>
</feature>
<feature type="strand" evidence="6">
    <location>
        <begin position="273"/>
        <end position="276"/>
    </location>
</feature>
<feature type="helix" evidence="6">
    <location>
        <begin position="281"/>
        <end position="283"/>
    </location>
</feature>
<feature type="helix" evidence="6">
    <location>
        <begin position="285"/>
        <end position="288"/>
    </location>
</feature>
<feature type="helix" evidence="6">
    <location>
        <begin position="289"/>
        <end position="293"/>
    </location>
</feature>
<feature type="strand" evidence="6">
    <location>
        <begin position="303"/>
        <end position="306"/>
    </location>
</feature>
<feature type="helix" evidence="6">
    <location>
        <begin position="310"/>
        <end position="315"/>
    </location>
</feature>
<feature type="turn" evidence="6">
    <location>
        <begin position="316"/>
        <end position="318"/>
    </location>
</feature>
<feature type="strand" evidence="6">
    <location>
        <begin position="320"/>
        <end position="323"/>
    </location>
</feature>
<feature type="helix" evidence="6">
    <location>
        <begin position="324"/>
        <end position="334"/>
    </location>
</feature>
<feature type="strand" evidence="6">
    <location>
        <begin position="338"/>
        <end position="342"/>
    </location>
</feature>
<feature type="helix" evidence="6">
    <location>
        <begin position="343"/>
        <end position="353"/>
    </location>
</feature>
<feature type="helix" evidence="6">
    <location>
        <begin position="359"/>
        <end position="375"/>
    </location>
</feature>
<feature type="turn" evidence="6">
    <location>
        <begin position="376"/>
        <end position="379"/>
    </location>
</feature>
<feature type="turn" evidence="6">
    <location>
        <begin position="385"/>
        <end position="388"/>
    </location>
</feature>
<feature type="helix" evidence="6">
    <location>
        <begin position="391"/>
        <end position="398"/>
    </location>
</feature>
<feature type="helix" evidence="6">
    <location>
        <begin position="402"/>
        <end position="410"/>
    </location>
</feature>
<feature type="strand" evidence="6">
    <location>
        <begin position="412"/>
        <end position="418"/>
    </location>
</feature>
<feature type="strand" evidence="6">
    <location>
        <begin position="428"/>
        <end position="433"/>
    </location>
</feature>
<feature type="helix" evidence="6">
    <location>
        <begin position="440"/>
        <end position="443"/>
    </location>
</feature>
<feature type="helix" evidence="6">
    <location>
        <begin position="456"/>
        <end position="462"/>
    </location>
</feature>
<feature type="strand" evidence="6">
    <location>
        <begin position="465"/>
        <end position="470"/>
    </location>
</feature>
<feature type="helix" evidence="6">
    <location>
        <begin position="483"/>
        <end position="492"/>
    </location>
</feature>
<feature type="strand" evidence="6">
    <location>
        <begin position="493"/>
        <end position="501"/>
    </location>
</feature>
<feature type="turn" evidence="6">
    <location>
        <begin position="504"/>
        <end position="506"/>
    </location>
</feature>
<feature type="helix" evidence="6">
    <location>
        <begin position="522"/>
        <end position="529"/>
    </location>
</feature>
<feature type="strand" evidence="6">
    <location>
        <begin position="532"/>
        <end position="534"/>
    </location>
</feature>
<feature type="strand" evidence="6">
    <location>
        <begin position="536"/>
        <end position="544"/>
    </location>
</feature>
<feature type="helix" evidence="6">
    <location>
        <begin position="549"/>
        <end position="553"/>
    </location>
</feature>
<feature type="strand" evidence="6">
    <location>
        <begin position="559"/>
        <end position="564"/>
    </location>
</feature>
<feature type="helix" evidence="7">
    <location>
        <begin position="567"/>
        <end position="569"/>
    </location>
</feature>
<feature type="helix" evidence="6">
    <location>
        <begin position="570"/>
        <end position="578"/>
    </location>
</feature>
<feature type="strand" evidence="7">
    <location>
        <begin position="580"/>
        <end position="582"/>
    </location>
</feature>
<feature type="helix" evidence="6">
    <location>
        <begin position="597"/>
        <end position="600"/>
    </location>
</feature>
<feature type="turn" evidence="6">
    <location>
        <begin position="612"/>
        <end position="615"/>
    </location>
</feature>
<feature type="turn" evidence="6">
    <location>
        <begin position="621"/>
        <end position="623"/>
    </location>
</feature>
<feature type="strand" evidence="6">
    <location>
        <begin position="641"/>
        <end position="644"/>
    </location>
</feature>
<feature type="strand" evidence="6">
    <location>
        <begin position="648"/>
        <end position="654"/>
    </location>
</feature>
<feature type="helix" evidence="6">
    <location>
        <begin position="655"/>
        <end position="660"/>
    </location>
</feature>
<feature type="helix" evidence="6">
    <location>
        <begin position="669"/>
        <end position="671"/>
    </location>
</feature>
<feature type="strand" evidence="6">
    <location>
        <begin position="672"/>
        <end position="683"/>
    </location>
</feature>
<feature type="strand" evidence="6">
    <location>
        <begin position="685"/>
        <end position="687"/>
    </location>
</feature>
<feature type="strand" evidence="6">
    <location>
        <begin position="689"/>
        <end position="700"/>
    </location>
</feature>
<feature type="strand" evidence="6">
    <location>
        <begin position="702"/>
        <end position="705"/>
    </location>
</feature>
<feature type="strand" evidence="6">
    <location>
        <begin position="710"/>
        <end position="720"/>
    </location>
</feature>
<feature type="strand" evidence="6">
    <location>
        <begin position="725"/>
        <end position="733"/>
    </location>
</feature>
<feature type="helix" evidence="6">
    <location>
        <begin position="735"/>
        <end position="737"/>
    </location>
</feature>
<feature type="strand" evidence="6">
    <location>
        <begin position="746"/>
        <end position="748"/>
    </location>
</feature>
<feature type="strand" evidence="6">
    <location>
        <begin position="751"/>
        <end position="757"/>
    </location>
</feature>
<feature type="turn" evidence="6">
    <location>
        <begin position="758"/>
        <end position="761"/>
    </location>
</feature>
<feature type="strand" evidence="6">
    <location>
        <begin position="762"/>
        <end position="771"/>
    </location>
</feature>
<feature type="strand" evidence="6">
    <location>
        <begin position="774"/>
        <end position="777"/>
    </location>
</feature>
<gene>
    <name type="primary">xlnD</name>
    <name type="synonym">xylA</name>
    <name type="ORF">AN2359</name>
</gene>
<comment type="function">
    <text evidence="3 4">Xylan 1,4-beta-xylosidase involved in the hydrolysis of xylan, a major structural heterogeneous polysaccharide found in plant biomass representing the second most abundant polysaccharide in the biosphere, after cellulose.</text>
</comment>
<comment type="catalytic activity">
    <reaction>
        <text>Hydrolysis of (1-&gt;4)-beta-D-xylans, to remove successive D-xylose residues from the non-reducing termini.</text>
        <dbReference type="EC" id="3.2.1.37"/>
    </reaction>
</comment>
<comment type="biophysicochemical properties">
    <phDependence>
        <text evidence="3">Optimum pH is 5.1.</text>
    </phDependence>
    <temperatureDependence>
        <text evidence="3">Optimum temperature is 52 degrees Celsius.</text>
    </temperatureDependence>
</comment>
<comment type="pathway">
    <text>Glycan degradation; xylan degradation.</text>
</comment>
<comment type="subcellular location">
    <subcellularLocation>
        <location evidence="5">Secreted</location>
    </subcellularLocation>
</comment>
<comment type="similarity">
    <text evidence="5">Belongs to the glycosyl hydrolase 3 family.</text>
</comment>
<accession>Q5BAS1</accession>
<accession>C8VNG4</accession>
<accession>O42810</accession>
<name>XYND_EMENI</name>
<organism>
    <name type="scientific">Emericella nidulans (strain FGSC A4 / ATCC 38163 / CBS 112.46 / NRRL 194 / M139)</name>
    <name type="common">Aspergillus nidulans</name>
    <dbReference type="NCBI Taxonomy" id="227321"/>
    <lineage>
        <taxon>Eukaryota</taxon>
        <taxon>Fungi</taxon>
        <taxon>Dikarya</taxon>
        <taxon>Ascomycota</taxon>
        <taxon>Pezizomycotina</taxon>
        <taxon>Eurotiomycetes</taxon>
        <taxon>Eurotiomycetidae</taxon>
        <taxon>Eurotiales</taxon>
        <taxon>Aspergillaceae</taxon>
        <taxon>Aspergillus</taxon>
        <taxon>Aspergillus subgen. Nidulantes</taxon>
    </lineage>
</organism>